<comment type="function">
    <text evidence="1">Peptidoglycan hydrolase involved in the splitting of the septum during cell division.</text>
</comment>
<comment type="catalytic activity">
    <reaction>
        <text>Hydrolyzes the link between N-acetylmuramoyl residues and L-amino acid residues in certain cell-wall glycopeptides.</text>
        <dbReference type="EC" id="3.5.1.28"/>
    </reaction>
</comment>
<comment type="subcellular location">
    <subcellularLocation>
        <location evidence="1">Secreted</location>
    </subcellularLocation>
    <subcellularLocation>
        <location evidence="1">Cell surface</location>
    </subcellularLocation>
</comment>
<accession>Q5HIL2</accession>
<proteinExistence type="inferred from homology"/>
<sequence length="334" mass="35836">MQKKVIAAIIGTSAISAVAATQANAATTHTVKPGESVWAISNKYGISIAKLKSLNNLTSNLIFPNQVLKVSGSSNSTSNSSRPSTNSGGGSYYTVQAGDSLSLIASKYGTTYQNIMRLNGLNNFFIYPGQKLKVSGTASSSNAASNSSRPSTNSGGGSYYTVQAGDSLSLIASKYGTTYQKIMSLNGLNNFFIYPGQKLKVTGNASTNSGSATTTNRGYNTPVFSHQNLYTWGQCTYHVFNRRAEIGKGISTYWWNANNWDNAAAADGYTIDNRPTVGSIAQTDVGYYGHVMFVERVNNDGSILVSEMNYSAAPGILTYRTVPAYQVNNYRYIH</sequence>
<dbReference type="EC" id="3.5.1.28"/>
<dbReference type="EMBL" id="CP000046">
    <property type="protein sequence ID" value="AAW37626.1"/>
    <property type="molecule type" value="Genomic_DNA"/>
</dbReference>
<dbReference type="RefSeq" id="WP_001170264.1">
    <property type="nucleotide sequence ID" value="NZ_JBGOFO010000010.1"/>
</dbReference>
<dbReference type="SMR" id="Q5HIL2"/>
<dbReference type="CAZy" id="CBM50">
    <property type="family name" value="Carbohydrate-Binding Module Family 50"/>
</dbReference>
<dbReference type="KEGG" id="sac:SACOL0507"/>
<dbReference type="HOGENOM" id="CLU_016043_1_3_9"/>
<dbReference type="Proteomes" id="UP000000530">
    <property type="component" value="Chromosome"/>
</dbReference>
<dbReference type="GO" id="GO:0009986">
    <property type="term" value="C:cell surface"/>
    <property type="evidence" value="ECO:0007669"/>
    <property type="project" value="UniProtKB-SubCell"/>
</dbReference>
<dbReference type="GO" id="GO:0005576">
    <property type="term" value="C:extracellular region"/>
    <property type="evidence" value="ECO:0007669"/>
    <property type="project" value="UniProtKB-SubCell"/>
</dbReference>
<dbReference type="GO" id="GO:0008932">
    <property type="term" value="F:lytic endotransglycosylase activity"/>
    <property type="evidence" value="ECO:0007669"/>
    <property type="project" value="TreeGrafter"/>
</dbReference>
<dbReference type="GO" id="GO:0008745">
    <property type="term" value="F:N-acetylmuramoyl-L-alanine amidase activity"/>
    <property type="evidence" value="ECO:0007669"/>
    <property type="project" value="UniProtKB-EC"/>
</dbReference>
<dbReference type="GO" id="GO:0071555">
    <property type="term" value="P:cell wall organization"/>
    <property type="evidence" value="ECO:0007669"/>
    <property type="project" value="UniProtKB-KW"/>
</dbReference>
<dbReference type="GO" id="GO:0042742">
    <property type="term" value="P:defense response to bacterium"/>
    <property type="evidence" value="ECO:0007669"/>
    <property type="project" value="UniProtKB-KW"/>
</dbReference>
<dbReference type="GO" id="GO:0000917">
    <property type="term" value="P:division septum assembly"/>
    <property type="evidence" value="ECO:0007669"/>
    <property type="project" value="UniProtKB-KW"/>
</dbReference>
<dbReference type="GO" id="GO:0031640">
    <property type="term" value="P:killing of cells of another organism"/>
    <property type="evidence" value="ECO:0007669"/>
    <property type="project" value="UniProtKB-KW"/>
</dbReference>
<dbReference type="CDD" id="cd00118">
    <property type="entry name" value="LysM"/>
    <property type="match status" value="3"/>
</dbReference>
<dbReference type="Gene3D" id="3.90.1720.10">
    <property type="entry name" value="endopeptidase domain like (from Nostoc punctiforme)"/>
    <property type="match status" value="1"/>
</dbReference>
<dbReference type="Gene3D" id="3.10.350.10">
    <property type="entry name" value="LysM domain"/>
    <property type="match status" value="3"/>
</dbReference>
<dbReference type="InterPro" id="IPR007921">
    <property type="entry name" value="CHAP_dom"/>
</dbReference>
<dbReference type="InterPro" id="IPR018392">
    <property type="entry name" value="LysM_dom"/>
</dbReference>
<dbReference type="InterPro" id="IPR036779">
    <property type="entry name" value="LysM_dom_sf"/>
</dbReference>
<dbReference type="InterPro" id="IPR038765">
    <property type="entry name" value="Papain-like_cys_pep_sf"/>
</dbReference>
<dbReference type="PANTHER" id="PTHR33734">
    <property type="entry name" value="LYSM DOMAIN-CONTAINING GPI-ANCHORED PROTEIN 2"/>
    <property type="match status" value="1"/>
</dbReference>
<dbReference type="PANTHER" id="PTHR33734:SF22">
    <property type="entry name" value="MEMBRANE-BOUND LYTIC MUREIN TRANSGLYCOSYLASE D"/>
    <property type="match status" value="1"/>
</dbReference>
<dbReference type="Pfam" id="PF05257">
    <property type="entry name" value="CHAP"/>
    <property type="match status" value="1"/>
</dbReference>
<dbReference type="Pfam" id="PF01476">
    <property type="entry name" value="LysM"/>
    <property type="match status" value="3"/>
</dbReference>
<dbReference type="SMART" id="SM00257">
    <property type="entry name" value="LysM"/>
    <property type="match status" value="3"/>
</dbReference>
<dbReference type="SUPFAM" id="SSF54001">
    <property type="entry name" value="Cysteine proteinases"/>
    <property type="match status" value="1"/>
</dbReference>
<dbReference type="SUPFAM" id="SSF54106">
    <property type="entry name" value="LysM domain"/>
    <property type="match status" value="3"/>
</dbReference>
<dbReference type="PROSITE" id="PS50911">
    <property type="entry name" value="CHAP"/>
    <property type="match status" value="1"/>
</dbReference>
<dbReference type="PROSITE" id="PS51782">
    <property type="entry name" value="LYSM"/>
    <property type="match status" value="3"/>
</dbReference>
<feature type="signal peptide" evidence="2">
    <location>
        <begin position="1"/>
        <end position="25"/>
    </location>
</feature>
<feature type="chain" id="PRO_0000231622" description="N-acetylmuramoyl-L-alanine amidase sle1">
    <location>
        <begin position="26"/>
        <end position="334"/>
    </location>
</feature>
<feature type="domain" description="LysM 1" evidence="4">
    <location>
        <begin position="27"/>
        <end position="70"/>
    </location>
</feature>
<feature type="domain" description="LysM 2" evidence="4">
    <location>
        <begin position="91"/>
        <end position="134"/>
    </location>
</feature>
<feature type="domain" description="LysM 3" evidence="4">
    <location>
        <begin position="158"/>
        <end position="201"/>
    </location>
</feature>
<feature type="domain" description="Peptidase C51" evidence="3">
    <location>
        <begin position="210"/>
        <end position="334"/>
    </location>
</feature>
<feature type="region of interest" description="Disordered" evidence="5">
    <location>
        <begin position="71"/>
        <end position="90"/>
    </location>
</feature>
<feature type="compositionally biased region" description="Low complexity" evidence="5">
    <location>
        <begin position="71"/>
        <end position="86"/>
    </location>
</feature>
<protein>
    <recommendedName>
        <fullName>N-acetylmuramoyl-L-alanine amidase sle1</fullName>
        <ecNumber>3.5.1.28</ecNumber>
    </recommendedName>
</protein>
<evidence type="ECO:0000250" key="1"/>
<evidence type="ECO:0000255" key="2"/>
<evidence type="ECO:0000255" key="3">
    <source>
        <dbReference type="PROSITE-ProRule" id="PRU00048"/>
    </source>
</evidence>
<evidence type="ECO:0000255" key="4">
    <source>
        <dbReference type="PROSITE-ProRule" id="PRU01118"/>
    </source>
</evidence>
<evidence type="ECO:0000256" key="5">
    <source>
        <dbReference type="SAM" id="MobiDB-lite"/>
    </source>
</evidence>
<reference key="1">
    <citation type="journal article" date="2005" name="J. Bacteriol.">
        <title>Insights on evolution of virulence and resistance from the complete genome analysis of an early methicillin-resistant Staphylococcus aureus strain and a biofilm-producing methicillin-resistant Staphylococcus epidermidis strain.</title>
        <authorList>
            <person name="Gill S.R."/>
            <person name="Fouts D.E."/>
            <person name="Archer G.L."/>
            <person name="Mongodin E.F."/>
            <person name="DeBoy R.T."/>
            <person name="Ravel J."/>
            <person name="Paulsen I.T."/>
            <person name="Kolonay J.F."/>
            <person name="Brinkac L.M."/>
            <person name="Beanan M.J."/>
            <person name="Dodson R.J."/>
            <person name="Daugherty S.C."/>
            <person name="Madupu R."/>
            <person name="Angiuoli S.V."/>
            <person name="Durkin A.S."/>
            <person name="Haft D.H."/>
            <person name="Vamathevan J.J."/>
            <person name="Khouri H."/>
            <person name="Utterback T.R."/>
            <person name="Lee C."/>
            <person name="Dimitrov G."/>
            <person name="Jiang L."/>
            <person name="Qin H."/>
            <person name="Weidman J."/>
            <person name="Tran K."/>
            <person name="Kang K.H."/>
            <person name="Hance I.R."/>
            <person name="Nelson K.E."/>
            <person name="Fraser C.M."/>
        </authorList>
    </citation>
    <scope>NUCLEOTIDE SEQUENCE [LARGE SCALE GENOMIC DNA]</scope>
    <source>
        <strain>COL</strain>
    </source>
</reference>
<keyword id="KW-0929">Antimicrobial</keyword>
<keyword id="KW-0081">Bacteriolytic enzyme</keyword>
<keyword id="KW-0131">Cell cycle</keyword>
<keyword id="KW-0132">Cell division</keyword>
<keyword id="KW-0961">Cell wall biogenesis/degradation</keyword>
<keyword id="KW-0378">Hydrolase</keyword>
<keyword id="KW-0677">Repeat</keyword>
<keyword id="KW-0964">Secreted</keyword>
<keyword id="KW-0717">Septation</keyword>
<keyword id="KW-0732">Signal</keyword>
<keyword id="KW-0843">Virulence</keyword>
<organism>
    <name type="scientific">Staphylococcus aureus (strain COL)</name>
    <dbReference type="NCBI Taxonomy" id="93062"/>
    <lineage>
        <taxon>Bacteria</taxon>
        <taxon>Bacillati</taxon>
        <taxon>Bacillota</taxon>
        <taxon>Bacilli</taxon>
        <taxon>Bacillales</taxon>
        <taxon>Staphylococcaceae</taxon>
        <taxon>Staphylococcus</taxon>
    </lineage>
</organism>
<gene>
    <name type="primary">sle1</name>
    <name type="synonym">aaa</name>
    <name type="ordered locus">SACOL0507</name>
</gene>
<name>SLE1_STAAC</name>